<name>CSP1_STREE</name>
<reference key="1">
    <citation type="journal article" date="1995" name="Proc. Natl. Acad. Sci. U.S.A.">
        <title>An unmodified heptadecapeptide pheromone induces competence for genetic transformation in Streptococcus pneumoniae.</title>
        <authorList>
            <person name="Haevarstein L.S."/>
            <person name="Coomaraswamy G."/>
            <person name="Morrison D.A."/>
        </authorList>
    </citation>
    <scope>NUCLEOTIDE SEQUENCE [GENOMIC DNA]</scope>
    <scope>PROTEIN SEQUENCE OF 25-41</scope>
    <source>
        <strain>Rx / CP1200</strain>
    </source>
</reference>
<reference key="2">
    <citation type="submission" date="1999-08" db="EMBL/GenBank/DDBJ databases">
        <title>The signalling domain of histidine kinase controls the specificity of interaction with the competence stimulating peptide.</title>
        <authorList>
            <person name="Iannelli F."/>
            <person name="Pozzi G."/>
            <person name="Morrison D.A."/>
        </authorList>
    </citation>
    <scope>NUCLEOTIDE SEQUENCE [GENOMIC DNA]</scope>
    <source>
        <strain>G376</strain>
    </source>
</reference>
<reference key="3">
    <citation type="journal article" date="1999" name="J. Bacteriol.">
        <title>Genetic diversity of the streptococcal competence (com) locus.</title>
        <authorList>
            <person name="Whatmore A.M."/>
        </authorList>
    </citation>
    <scope>NUCLEOTIDE SEQUENCE [GENOMIC DNA]</scope>
    <source>
        <strain>29044</strain>
        <strain>41G</strain>
        <strain>670</strain>
        <strain>7731</strain>
        <strain>859</strain>
        <strain>871</strain>
        <strain>872</strain>
        <strain>873</strain>
        <strain>875</strain>
        <strain>878</strain>
        <strain>880</strain>
        <strain>881</strain>
        <strain>950</strain>
        <strain>951</strain>
        <strain>952</strain>
        <strain>953</strain>
        <strain>954</strain>
        <strain>960</strain>
        <strain>964</strain>
        <strain>967</strain>
        <strain>9858</strain>
        <strain>Col11</strain>
        <strain>Col12</strain>
        <strain>Col14</strain>
        <strain>Col6</strain>
        <strain>Col7</strain>
        <strain>Col8</strain>
        <strain>Pn107</strain>
        <strain>Pn108</strain>
        <strain>Pn109</strain>
        <strain>Pn110</strain>
        <strain>Pn111</strain>
        <strain>Pn112</strain>
        <strain>Pn12</strain>
        <strain>Pn148</strain>
        <strain>Pn15</strain>
        <strain>Pn16</strain>
        <strain>Pn5</strain>
        <strain>Pn6</strain>
        <strain>Pn60</strain>
        <strain>Rst7</strain>
        <strain>VA1</strain>
    </source>
</reference>
<protein>
    <recommendedName>
        <fullName>Competence-stimulating peptide type 1</fullName>
        <shortName>CSP-1</shortName>
    </recommendedName>
</protein>
<dbReference type="EMBL" id="U33315">
    <property type="protein sequence ID" value="AAC44440.1"/>
    <property type="molecule type" value="Genomic_DNA"/>
</dbReference>
<dbReference type="EMBL" id="AF181270">
    <property type="protein sequence ID" value="AAK48419.1"/>
    <property type="molecule type" value="Genomic_DNA"/>
</dbReference>
<dbReference type="EMBL" id="AJ240738">
    <property type="protein sequence ID" value="CAB39422.1"/>
    <property type="molecule type" value="Genomic_DNA"/>
</dbReference>
<dbReference type="EMBL" id="AJ240739">
    <property type="protein sequence ID" value="CAB39424.1"/>
    <property type="molecule type" value="Genomic_DNA"/>
</dbReference>
<dbReference type="EMBL" id="AJ240740">
    <property type="protein sequence ID" value="CAB39426.1"/>
    <property type="molecule type" value="Genomic_DNA"/>
</dbReference>
<dbReference type="EMBL" id="AJ240741">
    <property type="protein sequence ID" value="CAB39428.1"/>
    <property type="molecule type" value="Genomic_DNA"/>
</dbReference>
<dbReference type="EMBL" id="AJ240742">
    <property type="protein sequence ID" value="CAB39430.1"/>
    <property type="molecule type" value="Genomic_DNA"/>
</dbReference>
<dbReference type="EMBL" id="AJ240743">
    <property type="protein sequence ID" value="CAB39432.1"/>
    <property type="molecule type" value="Genomic_DNA"/>
</dbReference>
<dbReference type="EMBL" id="AJ240744">
    <property type="protein sequence ID" value="CAB39434.1"/>
    <property type="molecule type" value="Genomic_DNA"/>
</dbReference>
<dbReference type="EMBL" id="AJ240745">
    <property type="protein sequence ID" value="CAB39436.1"/>
    <property type="molecule type" value="Genomic_DNA"/>
</dbReference>
<dbReference type="EMBL" id="AJ240746">
    <property type="protein sequence ID" value="CAB39438.1"/>
    <property type="molecule type" value="Genomic_DNA"/>
</dbReference>
<dbReference type="EMBL" id="AJ240747">
    <property type="protein sequence ID" value="CAB39440.1"/>
    <property type="molecule type" value="Genomic_DNA"/>
</dbReference>
<dbReference type="EMBL" id="AJ240748">
    <property type="protein sequence ID" value="CAB39442.1"/>
    <property type="molecule type" value="Genomic_DNA"/>
</dbReference>
<dbReference type="EMBL" id="AJ240749">
    <property type="protein sequence ID" value="CAB39444.1"/>
    <property type="molecule type" value="Genomic_DNA"/>
</dbReference>
<dbReference type="EMBL" id="AJ240750">
    <property type="protein sequence ID" value="CAB39446.1"/>
    <property type="molecule type" value="Genomic_DNA"/>
</dbReference>
<dbReference type="EMBL" id="AJ240751">
    <property type="protein sequence ID" value="CAB39448.1"/>
    <property type="molecule type" value="Genomic_DNA"/>
</dbReference>
<dbReference type="EMBL" id="AJ240752">
    <property type="protein sequence ID" value="CAB39450.1"/>
    <property type="molecule type" value="Genomic_DNA"/>
</dbReference>
<dbReference type="EMBL" id="AJ240753">
    <property type="protein sequence ID" value="CAB39452.1"/>
    <property type="molecule type" value="Genomic_DNA"/>
</dbReference>
<dbReference type="EMBL" id="AJ240754">
    <property type="protein sequence ID" value="CAB39454.1"/>
    <property type="molecule type" value="Genomic_DNA"/>
</dbReference>
<dbReference type="EMBL" id="AJ240755">
    <property type="protein sequence ID" value="CAB39456.1"/>
    <property type="molecule type" value="Genomic_DNA"/>
</dbReference>
<dbReference type="EMBL" id="AJ240756">
    <property type="protein sequence ID" value="CAB39458.1"/>
    <property type="molecule type" value="Genomic_DNA"/>
</dbReference>
<dbReference type="EMBL" id="AJ240757">
    <property type="protein sequence ID" value="CAB39460.1"/>
    <property type="molecule type" value="Genomic_DNA"/>
</dbReference>
<dbReference type="EMBL" id="AJ240758">
    <property type="protein sequence ID" value="CAB39462.1"/>
    <property type="molecule type" value="Genomic_DNA"/>
</dbReference>
<dbReference type="EMBL" id="AJ240761">
    <property type="protein sequence ID" value="CAB39468.1"/>
    <property type="molecule type" value="Genomic_DNA"/>
</dbReference>
<dbReference type="EMBL" id="AJ240766">
    <property type="protein sequence ID" value="CAB39472.1"/>
    <property type="molecule type" value="Genomic_DNA"/>
</dbReference>
<dbReference type="EMBL" id="AJ240768">
    <property type="protein sequence ID" value="CAB39476.1"/>
    <property type="molecule type" value="Genomic_DNA"/>
</dbReference>
<dbReference type="EMBL" id="AJ240769">
    <property type="protein sequence ID" value="CAB39478.1"/>
    <property type="molecule type" value="Genomic_DNA"/>
</dbReference>
<dbReference type="EMBL" id="AJ240770">
    <property type="protein sequence ID" value="CAB39480.1"/>
    <property type="molecule type" value="Genomic_DNA"/>
</dbReference>
<dbReference type="EMBL" id="AJ240771">
    <property type="protein sequence ID" value="CAB39482.1"/>
    <property type="molecule type" value="Genomic_DNA"/>
</dbReference>
<dbReference type="EMBL" id="AJ240772">
    <property type="protein sequence ID" value="CAB39484.1"/>
    <property type="molecule type" value="Genomic_DNA"/>
</dbReference>
<dbReference type="EMBL" id="AJ240774">
    <property type="protein sequence ID" value="CAB39488.1"/>
    <property type="molecule type" value="Genomic_DNA"/>
</dbReference>
<dbReference type="EMBL" id="AJ240775">
    <property type="protein sequence ID" value="CAB39490.1"/>
    <property type="molecule type" value="Genomic_DNA"/>
</dbReference>
<dbReference type="EMBL" id="AJ240776">
    <property type="protein sequence ID" value="CAB39492.1"/>
    <property type="molecule type" value="Genomic_DNA"/>
</dbReference>
<dbReference type="EMBL" id="AJ240777">
    <property type="protein sequence ID" value="CAB39494.1"/>
    <property type="molecule type" value="Genomic_DNA"/>
</dbReference>
<dbReference type="EMBL" id="AJ240778">
    <property type="protein sequence ID" value="CAB39496.1"/>
    <property type="molecule type" value="Genomic_DNA"/>
</dbReference>
<dbReference type="EMBL" id="AJ240779">
    <property type="protein sequence ID" value="CAB39498.1"/>
    <property type="molecule type" value="Genomic_DNA"/>
</dbReference>
<dbReference type="EMBL" id="AJ240780">
    <property type="protein sequence ID" value="CAB39500.1"/>
    <property type="molecule type" value="Genomic_DNA"/>
</dbReference>
<dbReference type="EMBL" id="AJ240781">
    <property type="protein sequence ID" value="CAB39502.1"/>
    <property type="molecule type" value="Genomic_DNA"/>
</dbReference>
<dbReference type="EMBL" id="AJ240782">
    <property type="protein sequence ID" value="CAB39504.1"/>
    <property type="molecule type" value="Genomic_DNA"/>
</dbReference>
<dbReference type="EMBL" id="AJ240783">
    <property type="protein sequence ID" value="CAB39506.1"/>
    <property type="molecule type" value="Genomic_DNA"/>
</dbReference>
<dbReference type="EMBL" id="AJ240784">
    <property type="protein sequence ID" value="CAB39508.1"/>
    <property type="molecule type" value="Genomic_DNA"/>
</dbReference>
<dbReference type="EMBL" id="AJ240785">
    <property type="protein sequence ID" value="CAB39510.1"/>
    <property type="molecule type" value="Genomic_DNA"/>
</dbReference>
<dbReference type="EMBL" id="AJ240786">
    <property type="protein sequence ID" value="CAB39512.1"/>
    <property type="molecule type" value="Genomic_DNA"/>
</dbReference>
<dbReference type="EMBL" id="AJ240789">
    <property type="protein sequence ID" value="CAB39518.1"/>
    <property type="molecule type" value="Genomic_DNA"/>
</dbReference>
<dbReference type="PIR" id="H98126">
    <property type="entry name" value="H98126"/>
</dbReference>
<dbReference type="RefSeq" id="WP_000799686.1">
    <property type="nucleotide sequence ID" value="NZ_WNIA01000009.1"/>
</dbReference>
<dbReference type="RefSeq" id="WP_000799689.1">
    <property type="nucleotide sequence ID" value="NZ_WSZH01000005.1"/>
</dbReference>
<dbReference type="PDB" id="6CJ8">
    <property type="method" value="NMR"/>
    <property type="chains" value="A=25-41"/>
</dbReference>
<dbReference type="PDB" id="6COO">
    <property type="method" value="NMR"/>
    <property type="chains" value="A=26-41"/>
</dbReference>
<dbReference type="PDB" id="6COP">
    <property type="method" value="NMR"/>
    <property type="chains" value="A=25-41"/>
</dbReference>
<dbReference type="PDB" id="6COQ">
    <property type="method" value="NMR"/>
    <property type="chains" value="A=25-41"/>
</dbReference>
<dbReference type="PDB" id="6COR">
    <property type="method" value="NMR"/>
    <property type="chains" value="A=25-41"/>
</dbReference>
<dbReference type="PDB" id="6COS">
    <property type="method" value="NMR"/>
    <property type="chains" value="A=25-41"/>
</dbReference>
<dbReference type="PDB" id="6COW">
    <property type="method" value="NMR"/>
    <property type="chains" value="A=25-41"/>
</dbReference>
<dbReference type="PDB" id="6OBW">
    <property type="method" value="NMR"/>
    <property type="chains" value="A=25-41"/>
</dbReference>
<dbReference type="PDB" id="6OC2">
    <property type="method" value="NMR"/>
    <property type="chains" value="A=25-41"/>
</dbReference>
<dbReference type="PDB" id="6OC4">
    <property type="method" value="NMR"/>
    <property type="chains" value="A=25-41"/>
</dbReference>
<dbReference type="PDB" id="6OLD">
    <property type="method" value="NMR"/>
    <property type="chains" value="A=25-41"/>
</dbReference>
<dbReference type="PDB" id="6V1N">
    <property type="method" value="NMR"/>
    <property type="chains" value="A=25-41"/>
</dbReference>
<dbReference type="PDBsum" id="6CJ8"/>
<dbReference type="PDBsum" id="6COO"/>
<dbReference type="PDBsum" id="6COP"/>
<dbReference type="PDBsum" id="6COQ"/>
<dbReference type="PDBsum" id="6COR"/>
<dbReference type="PDBsum" id="6COS"/>
<dbReference type="PDBsum" id="6COW"/>
<dbReference type="PDBsum" id="6OBW"/>
<dbReference type="PDBsum" id="6OC2"/>
<dbReference type="PDBsum" id="6OC4"/>
<dbReference type="PDBsum" id="6OLD"/>
<dbReference type="PDBsum" id="6V1N"/>
<dbReference type="BMRB" id="P60242"/>
<dbReference type="SMR" id="P60242"/>
<dbReference type="GeneID" id="45652540"/>
<dbReference type="OrthoDB" id="2228515at2"/>
<dbReference type="GO" id="GO:0005576">
    <property type="term" value="C:extracellular region"/>
    <property type="evidence" value="ECO:0007669"/>
    <property type="project" value="UniProtKB-SubCell"/>
</dbReference>
<dbReference type="GO" id="GO:0005186">
    <property type="term" value="F:pheromone activity"/>
    <property type="evidence" value="ECO:0007669"/>
    <property type="project" value="UniProtKB-KW"/>
</dbReference>
<dbReference type="GO" id="GO:0030420">
    <property type="term" value="P:establishment of competence for transformation"/>
    <property type="evidence" value="ECO:0007669"/>
    <property type="project" value="UniProtKB-KW"/>
</dbReference>
<dbReference type="InterPro" id="IPR004288">
    <property type="entry name" value="Competence_ComC"/>
</dbReference>
<dbReference type="NCBIfam" id="NF033214">
    <property type="entry name" value="ComC_Streptocco"/>
    <property type="match status" value="1"/>
</dbReference>
<dbReference type="Pfam" id="PF03047">
    <property type="entry name" value="ComC"/>
    <property type="match status" value="1"/>
</dbReference>
<comment type="function">
    <text>Acts as a pheromone, induces cells to develop competence for genetic transformation.</text>
</comment>
<comment type="subcellular location">
    <subcellularLocation>
        <location>Secreted</location>
    </subcellularLocation>
</comment>
<comment type="similarity">
    <text evidence="2">Belongs to the ComC family.</text>
</comment>
<proteinExistence type="evidence at protein level"/>
<keyword id="KW-0002">3D-structure</keyword>
<keyword id="KW-0178">Competence</keyword>
<keyword id="KW-0903">Direct protein sequencing</keyword>
<keyword id="KW-0588">Pheromone</keyword>
<keyword id="KW-0964">Secreted</keyword>
<feature type="propeptide" id="PRO_0000005881" evidence="1">
    <location>
        <begin position="1"/>
        <end position="24"/>
    </location>
</feature>
<feature type="peptide" id="PRO_0000005882" description="Competence-stimulating peptide type 1">
    <location>
        <begin position="25"/>
        <end position="41"/>
    </location>
</feature>
<feature type="turn" evidence="3">
    <location>
        <begin position="29"/>
        <end position="35"/>
    </location>
</feature>
<feature type="helix" evidence="3">
    <location>
        <begin position="36"/>
        <end position="38"/>
    </location>
</feature>
<accession>P60242</accession>
<accession>Q54712</accession>
<evidence type="ECO:0000269" key="1">
    <source>
    </source>
</evidence>
<evidence type="ECO:0000305" key="2"/>
<evidence type="ECO:0007829" key="3">
    <source>
        <dbReference type="PDB" id="6CJ8"/>
    </source>
</evidence>
<organism>
    <name type="scientific">Streptococcus pneumoniae</name>
    <dbReference type="NCBI Taxonomy" id="1313"/>
    <lineage>
        <taxon>Bacteria</taxon>
        <taxon>Bacillati</taxon>
        <taxon>Bacillota</taxon>
        <taxon>Bacilli</taxon>
        <taxon>Lactobacillales</taxon>
        <taxon>Streptococcaceae</taxon>
        <taxon>Streptococcus</taxon>
    </lineage>
</organism>
<sequence>MKNTVKLEQFVALKEKDLQKIKGGEMRLSKFFRDFILQRKK</sequence>
<gene>
    <name type="primary">comC1</name>
    <name type="synonym">comC</name>
</gene>